<comment type="function">
    <text evidence="1 2">Component of the viral envelope that plays a central role in virus morphogenesis and assembly via its interactions with other viral proteins.</text>
</comment>
<comment type="subunit">
    <text evidence="1 2">Homomultimer. Interacts with envelope E protein in the budding compartment of the host cell, which is located between endoplasmic reticulum and the Golgi complex. Forms a complex with HE and S proteins. Interacts with nucleocapsid N protein. This interaction probably participates in RNA packaging into the virus.</text>
</comment>
<comment type="subcellular location">
    <subcellularLocation>
        <location evidence="1">Virion membrane</location>
        <topology evidence="1">Multi-pass membrane protein</topology>
    </subcellularLocation>
    <subcellularLocation>
        <location evidence="1">Host Golgi apparatus membrane</location>
        <topology evidence="1">Multi-pass membrane protein</topology>
    </subcellularLocation>
    <text evidence="1">Largely embedded in the lipid bilayer.</text>
</comment>
<comment type="similarity">
    <text evidence="1">Belongs to the betacoronaviruses M protein family.</text>
</comment>
<accession>Q0Q4E7</accession>
<organism>
    <name type="scientific">Bat coronavirus 133/2005</name>
    <name type="common">BtCoV</name>
    <name type="synonym">BtCoV/133/2005</name>
    <dbReference type="NCBI Taxonomy" id="389230"/>
    <lineage>
        <taxon>Viruses</taxon>
        <taxon>Riboviria</taxon>
        <taxon>Orthornavirae</taxon>
        <taxon>Pisuviricota</taxon>
        <taxon>Pisoniviricetes</taxon>
        <taxon>Nidovirales</taxon>
        <taxon>Cornidovirineae</taxon>
        <taxon>Coronaviridae</taxon>
        <taxon>Orthocoronavirinae</taxon>
        <taxon>Betacoronavirus</taxon>
        <taxon>Merbecovirus</taxon>
        <taxon>Bat coronavirus HKU4</taxon>
    </lineage>
</organism>
<sequence length="219" mass="24690">MSSNGSLTKDEVVNIIKDWNFSWSIIFLLITIVLQYGYPSRSMMVYVFKMFILWLLWPASMALSIFSAIYPISLASQIISGILAAICAVMWLAYFVQSIRLFMRTGSWWSFNPESNCLLNVPIGGTTVVRPLVEDSTSVTAVVNDGHLKMAGMHFGRCDYDRLPMEITVAKPSVLIALKMVKRQSYGTNSGVAIFHRYKAGNYRRPTIIQDEELALLRA</sequence>
<reference key="1">
    <citation type="journal article" date="2006" name="J. Virol.">
        <title>Prevalence and genetic diversity of coronaviruses in bats from China.</title>
        <authorList>
            <person name="Tang X.C."/>
            <person name="Zhang J.X."/>
            <person name="Zhang S.Y."/>
            <person name="Wang P."/>
            <person name="Fan X.H."/>
            <person name="Li L.F."/>
            <person name="Li G."/>
            <person name="Dong B.Q."/>
            <person name="Liu W."/>
            <person name="Cheung C.L."/>
            <person name="Xu K.M."/>
            <person name="Song W.J."/>
            <person name="Vijaykrishna D."/>
            <person name="Poon L.L.M."/>
            <person name="Peiris J.S.M."/>
            <person name="Smith G.J."/>
            <person name="Chen H."/>
            <person name="Guan Y."/>
        </authorList>
    </citation>
    <scope>NUCLEOTIDE SEQUENCE [GENOMIC RNA]</scope>
</reference>
<proteinExistence type="inferred from homology"/>
<dbReference type="EMBL" id="DQ648794">
    <property type="protein sequence ID" value="ABG47057.1"/>
    <property type="molecule type" value="Genomic_RNA"/>
</dbReference>
<dbReference type="SMR" id="Q0Q4E7"/>
<dbReference type="Proteomes" id="UP000007449">
    <property type="component" value="Genome"/>
</dbReference>
<dbReference type="GO" id="GO:0044178">
    <property type="term" value="C:host cell Golgi membrane"/>
    <property type="evidence" value="ECO:0007669"/>
    <property type="project" value="UniProtKB-SubCell"/>
</dbReference>
<dbReference type="GO" id="GO:0016020">
    <property type="term" value="C:membrane"/>
    <property type="evidence" value="ECO:0007669"/>
    <property type="project" value="UniProtKB-UniRule"/>
</dbReference>
<dbReference type="GO" id="GO:0019031">
    <property type="term" value="C:viral envelope"/>
    <property type="evidence" value="ECO:0007669"/>
    <property type="project" value="UniProtKB-UniRule"/>
</dbReference>
<dbReference type="GO" id="GO:0055036">
    <property type="term" value="C:virion membrane"/>
    <property type="evidence" value="ECO:0007669"/>
    <property type="project" value="UniProtKB-SubCell"/>
</dbReference>
<dbReference type="GO" id="GO:0039660">
    <property type="term" value="F:structural constituent of virion"/>
    <property type="evidence" value="ECO:0007669"/>
    <property type="project" value="UniProtKB-UniRule"/>
</dbReference>
<dbReference type="CDD" id="cd21567">
    <property type="entry name" value="MERS-like-CoV_M"/>
    <property type="match status" value="1"/>
</dbReference>
<dbReference type="HAMAP" id="MF_04202">
    <property type="entry name" value="BETA_CORONA_M"/>
    <property type="match status" value="1"/>
</dbReference>
<dbReference type="InterPro" id="IPR002574">
    <property type="entry name" value="M_CoV"/>
</dbReference>
<dbReference type="InterPro" id="IPR044363">
    <property type="entry name" value="M_MERS-like-CoV"/>
</dbReference>
<dbReference type="Pfam" id="PF01635">
    <property type="entry name" value="CoV_M"/>
    <property type="match status" value="1"/>
</dbReference>
<dbReference type="PROSITE" id="PS51927">
    <property type="entry name" value="COV_M"/>
    <property type="match status" value="1"/>
</dbReference>
<evidence type="ECO:0000255" key="1">
    <source>
        <dbReference type="HAMAP-Rule" id="MF_04202"/>
    </source>
</evidence>
<evidence type="ECO:0000255" key="2">
    <source>
        <dbReference type="PROSITE-ProRule" id="PRU01275"/>
    </source>
</evidence>
<protein>
    <recommendedName>
        <fullName evidence="1">Membrane protein</fullName>
        <shortName evidence="1">M protein</shortName>
    </recommendedName>
    <alternativeName>
        <fullName evidence="1">E1 glycoprotein</fullName>
    </alternativeName>
    <alternativeName>
        <fullName evidence="1">Matrix glycoprotein</fullName>
    </alternativeName>
    <alternativeName>
        <fullName evidence="1">Membrane glycoprotein</fullName>
    </alternativeName>
</protein>
<feature type="chain" id="PRO_0000290330" description="Membrane protein">
    <location>
        <begin position="1"/>
        <end position="219"/>
    </location>
</feature>
<feature type="topological domain" description="Virion surface" evidence="1">
    <location>
        <begin position="1"/>
        <end position="18"/>
    </location>
</feature>
<feature type="transmembrane region" description="Helical" evidence="1">
    <location>
        <begin position="19"/>
        <end position="39"/>
    </location>
</feature>
<feature type="topological domain" description="Intravirion" evidence="1">
    <location>
        <begin position="40"/>
        <end position="49"/>
    </location>
</feature>
<feature type="transmembrane region" description="Helical" evidence="1">
    <location>
        <begin position="50"/>
        <end position="70"/>
    </location>
</feature>
<feature type="topological domain" description="Virion surface" evidence="1">
    <location>
        <begin position="71"/>
        <end position="78"/>
    </location>
</feature>
<feature type="transmembrane region" description="Helical" evidence="1">
    <location>
        <begin position="79"/>
        <end position="99"/>
    </location>
</feature>
<feature type="topological domain" description="Intravirion" evidence="1">
    <location>
        <begin position="100"/>
        <end position="219"/>
    </location>
</feature>
<keyword id="KW-0325">Glycoprotein</keyword>
<keyword id="KW-1040">Host Golgi apparatus</keyword>
<keyword id="KW-1043">Host membrane</keyword>
<keyword id="KW-0945">Host-virus interaction</keyword>
<keyword id="KW-0472">Membrane</keyword>
<keyword id="KW-0812">Transmembrane</keyword>
<keyword id="KW-1133">Transmembrane helix</keyword>
<keyword id="KW-0261">Viral envelope protein</keyword>
<keyword id="KW-0899">Viral immunoevasion</keyword>
<keyword id="KW-0468">Viral matrix protein</keyword>
<keyword id="KW-0946">Virion</keyword>
<organismHost>
    <name type="scientific">Tylonycteris pachypus</name>
    <name type="common">Lesser bamboo bat</name>
    <name type="synonym">Vespertilio pachypus</name>
    <dbReference type="NCBI Taxonomy" id="258959"/>
</organismHost>
<name>VME1_BC133</name>
<gene>
    <name evidence="1" type="primary">M</name>
    <name type="ORF">5</name>
</gene>